<accession>Q9HY42</accession>
<reference key="1">
    <citation type="journal article" date="2000" name="Nature">
        <title>Complete genome sequence of Pseudomonas aeruginosa PAO1, an opportunistic pathogen.</title>
        <authorList>
            <person name="Stover C.K."/>
            <person name="Pham X.-Q.T."/>
            <person name="Erwin A.L."/>
            <person name="Mizoguchi S.D."/>
            <person name="Warrener P."/>
            <person name="Hickey M.J."/>
            <person name="Brinkman F.S.L."/>
            <person name="Hufnagle W.O."/>
            <person name="Kowalik D.J."/>
            <person name="Lagrou M."/>
            <person name="Garber R.L."/>
            <person name="Goltry L."/>
            <person name="Tolentino E."/>
            <person name="Westbrock-Wadman S."/>
            <person name="Yuan Y."/>
            <person name="Brody L.L."/>
            <person name="Coulter S.N."/>
            <person name="Folger K.R."/>
            <person name="Kas A."/>
            <person name="Larbig K."/>
            <person name="Lim R.M."/>
            <person name="Smith K.A."/>
            <person name="Spencer D.H."/>
            <person name="Wong G.K.-S."/>
            <person name="Wu Z."/>
            <person name="Paulsen I.T."/>
            <person name="Reizer J."/>
            <person name="Saier M.H. Jr."/>
            <person name="Hancock R.E.W."/>
            <person name="Lory S."/>
            <person name="Olson M.V."/>
        </authorList>
    </citation>
    <scope>NUCLEOTIDE SEQUENCE [LARGE SCALE GENOMIC DNA]</scope>
    <source>
        <strain>ATCC 15692 / DSM 22644 / CIP 104116 / JCM 14847 / LMG 12228 / 1C / PRS 101 / PAO1</strain>
    </source>
</reference>
<comment type="similarity">
    <text evidence="2">Belongs to the PhzF family.</text>
</comment>
<keyword id="KW-0413">Isomerase</keyword>
<keyword id="KW-1185">Reference proteome</keyword>
<organism>
    <name type="scientific">Pseudomonas aeruginosa (strain ATCC 15692 / DSM 22644 / CIP 104116 / JCM 14847 / LMG 12228 / 1C / PRS 101 / PAO1)</name>
    <dbReference type="NCBI Taxonomy" id="208964"/>
    <lineage>
        <taxon>Bacteria</taxon>
        <taxon>Pseudomonadati</taxon>
        <taxon>Pseudomonadota</taxon>
        <taxon>Gammaproteobacteria</taxon>
        <taxon>Pseudomonadales</taxon>
        <taxon>Pseudomonadaceae</taxon>
        <taxon>Pseudomonas</taxon>
    </lineage>
</organism>
<dbReference type="EC" id="5.1.-.-"/>
<dbReference type="EMBL" id="AE004091">
    <property type="protein sequence ID" value="AAG06966.1"/>
    <property type="molecule type" value="Genomic_DNA"/>
</dbReference>
<dbReference type="PIR" id="E83199">
    <property type="entry name" value="E83199"/>
</dbReference>
<dbReference type="RefSeq" id="NP_252268.1">
    <property type="nucleotide sequence ID" value="NC_002516.2"/>
</dbReference>
<dbReference type="RefSeq" id="WP_003092159.1">
    <property type="nucleotide sequence ID" value="NZ_QZGE01000001.1"/>
</dbReference>
<dbReference type="SMR" id="Q9HY42"/>
<dbReference type="STRING" id="208964.PA3578"/>
<dbReference type="PaxDb" id="208964-PA3578"/>
<dbReference type="DNASU" id="880177"/>
<dbReference type="GeneID" id="880177"/>
<dbReference type="KEGG" id="pae:PA3578"/>
<dbReference type="PATRIC" id="fig|208964.12.peg.3744"/>
<dbReference type="PseudoCAP" id="PA3578"/>
<dbReference type="HOGENOM" id="CLU_048756_2_2_6"/>
<dbReference type="InParanoid" id="Q9HY42"/>
<dbReference type="OrthoDB" id="9788221at2"/>
<dbReference type="PhylomeDB" id="Q9HY42"/>
<dbReference type="BioCyc" id="PAER208964:G1FZ6-3647-MONOMER"/>
<dbReference type="Proteomes" id="UP000002438">
    <property type="component" value="Chromosome"/>
</dbReference>
<dbReference type="GO" id="GO:0005737">
    <property type="term" value="C:cytoplasm"/>
    <property type="evidence" value="ECO:0000318"/>
    <property type="project" value="GO_Central"/>
</dbReference>
<dbReference type="GO" id="GO:0016853">
    <property type="term" value="F:isomerase activity"/>
    <property type="evidence" value="ECO:0000318"/>
    <property type="project" value="GO_Central"/>
</dbReference>
<dbReference type="GO" id="GO:0009058">
    <property type="term" value="P:biosynthetic process"/>
    <property type="evidence" value="ECO:0007669"/>
    <property type="project" value="InterPro"/>
</dbReference>
<dbReference type="Gene3D" id="3.10.310.10">
    <property type="entry name" value="Diaminopimelate Epimerase, Chain A, domain 1"/>
    <property type="match status" value="2"/>
</dbReference>
<dbReference type="InterPro" id="IPR003719">
    <property type="entry name" value="Phenazine_PhzF-like"/>
</dbReference>
<dbReference type="NCBIfam" id="TIGR00654">
    <property type="entry name" value="PhzF_family"/>
    <property type="match status" value="1"/>
</dbReference>
<dbReference type="PANTHER" id="PTHR13774">
    <property type="entry name" value="PHENAZINE BIOSYNTHESIS PROTEIN"/>
    <property type="match status" value="1"/>
</dbReference>
<dbReference type="PANTHER" id="PTHR13774:SF17">
    <property type="entry name" value="PHENAZINE BIOSYNTHESIS-LIKE DOMAIN-CONTAINING PROTEIN"/>
    <property type="match status" value="1"/>
</dbReference>
<dbReference type="Pfam" id="PF02567">
    <property type="entry name" value="PhzC-PhzF"/>
    <property type="match status" value="1"/>
</dbReference>
<dbReference type="PIRSF" id="PIRSF016184">
    <property type="entry name" value="PhzC_PhzF"/>
    <property type="match status" value="1"/>
</dbReference>
<dbReference type="SUPFAM" id="SSF54506">
    <property type="entry name" value="Diaminopimelate epimerase-like"/>
    <property type="match status" value="1"/>
</dbReference>
<feature type="chain" id="PRO_0000162399" description="Uncharacterized isomerase PA3578">
    <location>
        <begin position="1"/>
        <end position="261"/>
    </location>
</feature>
<feature type="active site" evidence="1">
    <location>
        <position position="46"/>
    </location>
</feature>
<sequence>MQLEFHQVDAFSSRPFSGNPAVVYRLDAWLADELMQMIATEHNLSETAFVVREGEAWRIRWFTPSVEVALCGHATLAAAHVLFEVYDEPGERLEFISRSGALRVNREDERLVLDFPAQYPSEVGSTVELEQALGLPPVDVLGSTDKLLVLLESEEAVRACRPDFAALARLPWRGVIVTARGLQKDFVSRFFAPAMGVDEDPVTGSAHCSLIPYWAQRLNKLSLTAQQCSARGGELWCRLEGERVSIAGHAVLVASGRIRLS</sequence>
<name>Y3578_PSEAE</name>
<protein>
    <recommendedName>
        <fullName>Uncharacterized isomerase PA3578</fullName>
        <ecNumber>5.1.-.-</ecNumber>
    </recommendedName>
</protein>
<gene>
    <name type="ordered locus">PA3578</name>
</gene>
<proteinExistence type="inferred from homology"/>
<evidence type="ECO:0000250" key="1"/>
<evidence type="ECO:0000305" key="2"/>